<organism>
    <name type="scientific">Medicago truncatula</name>
    <name type="common">Barrel medic</name>
    <name type="synonym">Medicago tribuloides</name>
    <dbReference type="NCBI Taxonomy" id="3880"/>
    <lineage>
        <taxon>Eukaryota</taxon>
        <taxon>Viridiplantae</taxon>
        <taxon>Streptophyta</taxon>
        <taxon>Embryophyta</taxon>
        <taxon>Tracheophyta</taxon>
        <taxon>Spermatophyta</taxon>
        <taxon>Magnoliopsida</taxon>
        <taxon>eudicotyledons</taxon>
        <taxon>Gunneridae</taxon>
        <taxon>Pentapetalae</taxon>
        <taxon>rosids</taxon>
        <taxon>fabids</taxon>
        <taxon>Fabales</taxon>
        <taxon>Fabaceae</taxon>
        <taxon>Papilionoideae</taxon>
        <taxon>50 kb inversion clade</taxon>
        <taxon>NPAAA clade</taxon>
        <taxon>Hologalegina</taxon>
        <taxon>IRL clade</taxon>
        <taxon>Trifolieae</taxon>
        <taxon>Medicago</taxon>
    </lineage>
</organism>
<protein>
    <recommendedName>
        <fullName>Flotillin-like protein 4</fullName>
    </recommendedName>
</protein>
<keyword id="KW-1003">Cell membrane</keyword>
<keyword id="KW-0175">Coiled coil</keyword>
<keyword id="KW-0472">Membrane</keyword>
<keyword id="KW-0536">Nodulation</keyword>
<reference key="1">
    <citation type="journal article" date="2010" name="Proc. Natl. Acad. Sci. U.S.A.">
        <title>Plant flotillins are required for infection by nitrogen-fixing bacteria.</title>
        <authorList>
            <person name="Haney C.H."/>
            <person name="Long S.R."/>
        </authorList>
    </citation>
    <scope>NUCLEOTIDE SEQUENCE [MRNA]</scope>
    <scope>FUNCTION</scope>
    <scope>INDUCTION</scope>
    <scope>TISSUE SPECIFICITY</scope>
    <scope>SUBCELLULAR LOCATION</scope>
</reference>
<evidence type="ECO:0000250" key="1"/>
<evidence type="ECO:0000255" key="2"/>
<evidence type="ECO:0000269" key="3">
    <source>
    </source>
</evidence>
<evidence type="ECO:0000305" key="4"/>
<proteinExistence type="evidence at transcript level"/>
<name>FLOT4_MEDTR</name>
<gene>
    <name type="primary">FLOT4</name>
</gene>
<dbReference type="EMBL" id="GU224281">
    <property type="protein sequence ID" value="ADA83097.1"/>
    <property type="molecule type" value="mRNA"/>
</dbReference>
<dbReference type="SMR" id="D2XNR1"/>
<dbReference type="PaxDb" id="3880-AES73584"/>
<dbReference type="EnsemblPlants" id="rna19197">
    <property type="protein sequence ID" value="RHN70598.1"/>
    <property type="gene ID" value="gene19197"/>
</dbReference>
<dbReference type="GeneID" id="11433510"/>
<dbReference type="Gramene" id="rna19197">
    <property type="protein sequence ID" value="RHN70598.1"/>
    <property type="gene ID" value="gene19197"/>
</dbReference>
<dbReference type="KEGG" id="mtr:11433510"/>
<dbReference type="eggNOG" id="KOG2668">
    <property type="taxonomic scope" value="Eukaryota"/>
</dbReference>
<dbReference type="HOGENOM" id="CLU_030844_1_1_1"/>
<dbReference type="OrthoDB" id="6080404at2759"/>
<dbReference type="ExpressionAtlas" id="D2XNR1">
    <property type="expression patterns" value="differential"/>
</dbReference>
<dbReference type="GO" id="GO:0016324">
    <property type="term" value="C:apical plasma membrane"/>
    <property type="evidence" value="ECO:0000314"/>
    <property type="project" value="UniProtKB"/>
</dbReference>
<dbReference type="GO" id="GO:0005901">
    <property type="term" value="C:caveola"/>
    <property type="evidence" value="ECO:0007669"/>
    <property type="project" value="UniProtKB-SubCell"/>
</dbReference>
<dbReference type="GO" id="GO:0005886">
    <property type="term" value="C:plasma membrane"/>
    <property type="evidence" value="ECO:0000314"/>
    <property type="project" value="UniProtKB"/>
</dbReference>
<dbReference type="GO" id="GO:0009877">
    <property type="term" value="P:nodulation"/>
    <property type="evidence" value="ECO:0000315"/>
    <property type="project" value="UniProtKB"/>
</dbReference>
<dbReference type="CDD" id="cd03399">
    <property type="entry name" value="SPFH_flotillin"/>
    <property type="match status" value="1"/>
</dbReference>
<dbReference type="Gene3D" id="3.30.479.30">
    <property type="entry name" value="Band 7 domain"/>
    <property type="match status" value="1"/>
</dbReference>
<dbReference type="InterPro" id="IPR001107">
    <property type="entry name" value="Band_7"/>
</dbReference>
<dbReference type="InterPro" id="IPR036013">
    <property type="entry name" value="Band_7/SPFH_dom_sf"/>
</dbReference>
<dbReference type="InterPro" id="IPR027705">
    <property type="entry name" value="Flotillin_fam"/>
</dbReference>
<dbReference type="PANTHER" id="PTHR13806:SF31">
    <property type="entry name" value="FLOTILLIN-LIKE PROTEIN 1-RELATED"/>
    <property type="match status" value="1"/>
</dbReference>
<dbReference type="PANTHER" id="PTHR13806">
    <property type="entry name" value="FLOTILLIN-RELATED"/>
    <property type="match status" value="1"/>
</dbReference>
<dbReference type="Pfam" id="PF01145">
    <property type="entry name" value="Band_7"/>
    <property type="match status" value="1"/>
</dbReference>
<dbReference type="SUPFAM" id="SSF117892">
    <property type="entry name" value="Band 7/SPFH domain"/>
    <property type="match status" value="1"/>
</dbReference>
<comment type="function">
    <text evidence="1 3">May act as a scaffolding protein within caveolar membranes, functionally participating in formation of caveolae or caveolae-like vesicles (By similarity). Required for normal infection threads initiation and elongation and nodulation. Probably involved in polar growth of the infection thread.</text>
</comment>
<comment type="subcellular location">
    <subcellularLocation>
        <location evidence="1">Membrane</location>
        <location evidence="1">Caveola</location>
    </subcellularLocation>
    <subcellularLocation>
        <location evidence="3">Cell membrane</location>
    </subcellularLocation>
    <text>In puncta evenly distributed in the cell membrane of root hair and epidermal cells. Accumulates in the tips of elongating root hairs and localizes to the infection thread membranes upon inoculation with bacteria.</text>
</comment>
<comment type="tissue specificity">
    <text evidence="3">Expressed in roots and nodules. Primarily expressed in vascular tissues. Upon induction of nodulation, expansion of expression in the root cortex in the region of elongating root hairs, which will eventually become colonized by bacteria. Expressed in the infection zone in nodules.</text>
</comment>
<comment type="induction">
    <text evidence="3">Up-regulated during the first 7 days of nodulation.</text>
</comment>
<comment type="miscellaneous">
    <text>The predicted palmitoylation site present in all other flotillin-like proteins is not conserved.</text>
</comment>
<comment type="similarity">
    <text evidence="4">Belongs to the band 7/mec-2 family. Flotillin subfamily.</text>
</comment>
<accession>D2XNR1</accession>
<feature type="chain" id="PRO_0000395207" description="Flotillin-like protein 4">
    <location>
        <begin position="1"/>
        <end position="475"/>
    </location>
</feature>
<feature type="coiled-coil region" evidence="2">
    <location>
        <begin position="235"/>
        <end position="255"/>
    </location>
</feature>
<feature type="coiled-coil region" evidence="2">
    <location>
        <begin position="305"/>
        <end position="325"/>
    </location>
</feature>
<sequence length="475" mass="52384">MYKVAKASQYLVITGIGIKDIKLAKKAWILPGQSYSVFDLSPVNYTFEVQAMSAEKLPFVLPAVFTIGPRVDDKESLLKYAKLISPHDKLSNHVKELVQGIIEGETRVLAASMTMEEVFRGTKEFKQEVFGKVQLELNQFGLLIYNANVKQLVDVPGHEYFSYLGQKTQMEAANQARVDVSEAKMKGEIGSKLREGQTLQNAAKIDAETKIIAMQRAGEGDKEGIKVRTEVKVFENQREAEVAEANSELAKKKAAWTKAAQVAEVEAAKAVALRDAELQGEVERMNALTTTEKLKAEFLSKASVQYETKVQEANWELYKKQKEAEAILYEKKAEAEAQKALADATFYARTQAAEAELYAKKKEAEGIVTLGNAQGVYLSALLNALGNNYTAVRDFLMINGGMFQEIAKINAEAVRGLEPKISIWTNGGDNSGGEGAMKEVAGVYKMLPPLFKTVHEQTGMLPPAWMGVLPDKNLN</sequence>